<feature type="chain" id="PRO_0000058295" description="PDZ domain-containing protein 2">
    <location>
        <begin position="1"/>
        <end position="2766"/>
    </location>
</feature>
<feature type="chain" id="PRO_0000302757" description="Processed PDZ domain-containing protein 2">
    <location>
        <begin position="2403" status="uncertain"/>
        <end position="2766"/>
    </location>
</feature>
<feature type="domain" description="PDZ 1" evidence="2">
    <location>
        <begin position="85"/>
        <end position="177"/>
    </location>
</feature>
<feature type="domain" description="PDZ 2" evidence="2">
    <location>
        <begin position="334"/>
        <end position="419"/>
    </location>
</feature>
<feature type="domain" description="PDZ 3" evidence="2">
    <location>
        <begin position="535"/>
        <end position="621"/>
    </location>
</feature>
<feature type="domain" description="PDZ 4" evidence="2">
    <location>
        <begin position="679"/>
        <end position="764"/>
    </location>
</feature>
<feature type="domain" description="PDZ 5" evidence="2">
    <location>
        <begin position="2550"/>
        <end position="2634"/>
    </location>
</feature>
<feature type="domain" description="PDZ 6" evidence="2">
    <location>
        <begin position="2678"/>
        <end position="2763"/>
    </location>
</feature>
<feature type="region of interest" description="Disordered" evidence="3">
    <location>
        <begin position="189"/>
        <end position="315"/>
    </location>
</feature>
<feature type="region of interest" description="Disordered" evidence="3">
    <location>
        <begin position="419"/>
        <end position="452"/>
    </location>
</feature>
<feature type="region of interest" description="Disordered" evidence="3">
    <location>
        <begin position="627"/>
        <end position="673"/>
    </location>
</feature>
<feature type="region of interest" description="Disordered" evidence="3">
    <location>
        <begin position="783"/>
        <end position="803"/>
    </location>
</feature>
<feature type="region of interest" description="Disordered" evidence="3">
    <location>
        <begin position="834"/>
        <end position="853"/>
    </location>
</feature>
<feature type="region of interest" description="Disordered" evidence="3">
    <location>
        <begin position="915"/>
        <end position="966"/>
    </location>
</feature>
<feature type="region of interest" description="Disordered" evidence="3">
    <location>
        <begin position="990"/>
        <end position="1425"/>
    </location>
</feature>
<feature type="region of interest" description="Disordered" evidence="3">
    <location>
        <begin position="1456"/>
        <end position="1531"/>
    </location>
</feature>
<feature type="region of interest" description="Disordered" evidence="3">
    <location>
        <begin position="1725"/>
        <end position="1909"/>
    </location>
</feature>
<feature type="region of interest" description="Disordered" evidence="3">
    <location>
        <begin position="1924"/>
        <end position="1967"/>
    </location>
</feature>
<feature type="region of interest" description="Disordered" evidence="3">
    <location>
        <begin position="2015"/>
        <end position="2070"/>
    </location>
</feature>
<feature type="region of interest" description="Disordered" evidence="3">
    <location>
        <begin position="2146"/>
        <end position="2174"/>
    </location>
</feature>
<feature type="region of interest" description="Disordered" evidence="3">
    <location>
        <begin position="2262"/>
        <end position="2397"/>
    </location>
</feature>
<feature type="region of interest" description="Disordered" evidence="3">
    <location>
        <begin position="2424"/>
        <end position="2450"/>
    </location>
</feature>
<feature type="region of interest" description="Disordered" evidence="3">
    <location>
        <begin position="2465"/>
        <end position="2496"/>
    </location>
</feature>
<feature type="region of interest" description="Disordered" evidence="3">
    <location>
        <begin position="2635"/>
        <end position="2667"/>
    </location>
</feature>
<feature type="compositionally biased region" description="Acidic residues" evidence="3">
    <location>
        <begin position="242"/>
        <end position="254"/>
    </location>
</feature>
<feature type="compositionally biased region" description="Basic and acidic residues" evidence="3">
    <location>
        <begin position="280"/>
        <end position="296"/>
    </location>
</feature>
<feature type="compositionally biased region" description="Polar residues" evidence="3">
    <location>
        <begin position="627"/>
        <end position="636"/>
    </location>
</feature>
<feature type="compositionally biased region" description="Low complexity" evidence="3">
    <location>
        <begin position="637"/>
        <end position="650"/>
    </location>
</feature>
<feature type="compositionally biased region" description="Polar residues" evidence="3">
    <location>
        <begin position="783"/>
        <end position="794"/>
    </location>
</feature>
<feature type="compositionally biased region" description="Acidic residues" evidence="3">
    <location>
        <begin position="918"/>
        <end position="927"/>
    </location>
</feature>
<feature type="compositionally biased region" description="Basic and acidic residues" evidence="3">
    <location>
        <begin position="1021"/>
        <end position="1038"/>
    </location>
</feature>
<feature type="compositionally biased region" description="Polar residues" evidence="3">
    <location>
        <begin position="1040"/>
        <end position="1061"/>
    </location>
</feature>
<feature type="compositionally biased region" description="Polar residues" evidence="3">
    <location>
        <begin position="1126"/>
        <end position="1137"/>
    </location>
</feature>
<feature type="compositionally biased region" description="Polar residues" evidence="3">
    <location>
        <begin position="1189"/>
        <end position="1220"/>
    </location>
</feature>
<feature type="compositionally biased region" description="Low complexity" evidence="3">
    <location>
        <begin position="1379"/>
        <end position="1393"/>
    </location>
</feature>
<feature type="compositionally biased region" description="Low complexity" evidence="3">
    <location>
        <begin position="1456"/>
        <end position="1471"/>
    </location>
</feature>
<feature type="compositionally biased region" description="Basic residues" evidence="3">
    <location>
        <begin position="1797"/>
        <end position="1806"/>
    </location>
</feature>
<feature type="compositionally biased region" description="Polar residues" evidence="3">
    <location>
        <begin position="1884"/>
        <end position="1901"/>
    </location>
</feature>
<feature type="compositionally biased region" description="Low complexity" evidence="3">
    <location>
        <begin position="1924"/>
        <end position="1937"/>
    </location>
</feature>
<feature type="compositionally biased region" description="Low complexity" evidence="3">
    <location>
        <begin position="1947"/>
        <end position="1963"/>
    </location>
</feature>
<feature type="compositionally biased region" description="Low complexity" evidence="3">
    <location>
        <begin position="2280"/>
        <end position="2296"/>
    </location>
</feature>
<feature type="compositionally biased region" description="Low complexity" evidence="3">
    <location>
        <begin position="2305"/>
        <end position="2321"/>
    </location>
</feature>
<feature type="compositionally biased region" description="Polar residues" evidence="3">
    <location>
        <begin position="2322"/>
        <end position="2347"/>
    </location>
</feature>
<feature type="compositionally biased region" description="Polar residues" evidence="3">
    <location>
        <begin position="2362"/>
        <end position="2372"/>
    </location>
</feature>
<feature type="site" description="Cleavage; by caspases">
    <location>
        <begin position="2402"/>
        <end position="2403"/>
    </location>
</feature>
<feature type="modified residue" description="Phosphoserine" evidence="7">
    <location>
        <position position="517"/>
    </location>
</feature>
<feature type="modified residue" description="Phosphoserine" evidence="7">
    <location>
        <position position="891"/>
    </location>
</feature>
<feature type="modified residue" description="Phosphoserine" evidence="7">
    <location>
        <position position="895"/>
    </location>
</feature>
<feature type="modified residue" description="Phosphoserine" evidence="7">
    <location>
        <position position="1767"/>
    </location>
</feature>
<feature type="mutagenesis site" description="Loss of proteolytic cleavage.">
    <original>DLDKLCNGED</original>
    <variation>I</variation>
    <location>
        <begin position="2402"/>
        <end position="2411"/>
    </location>
</feature>
<feature type="mutagenesis site" description="Loss of proteolytic cleavage." evidence="6">
    <original>D</original>
    <variation>A</variation>
    <location>
        <position position="2402"/>
    </location>
</feature>
<feature type="mutagenesis site" description="No loss of proteolytic cleavage." evidence="6">
    <original>D</original>
    <variation>A</variation>
    <location>
        <position position="2404"/>
    </location>
</feature>
<keyword id="KW-0130">Cell adhesion</keyword>
<keyword id="KW-0965">Cell junction</keyword>
<keyword id="KW-0963">Cytoplasm</keyword>
<keyword id="KW-0256">Endoplasmic reticulum</keyword>
<keyword id="KW-0539">Nucleus</keyword>
<keyword id="KW-0597">Phosphoprotein</keyword>
<keyword id="KW-1185">Reference proteome</keyword>
<keyword id="KW-0677">Repeat</keyword>
<keyword id="KW-0964">Secreted</keyword>
<comment type="subunit">
    <text evidence="4 5">Interacts with SCN10A, CTNND2 and PKP4.</text>
</comment>
<comment type="subcellular location">
    <subcellularLocation>
        <location evidence="6">Nucleus</location>
    </subcellularLocation>
    <subcellularLocation>
        <location evidence="1">Cytoplasm</location>
    </subcellularLocation>
    <subcellularLocation>
        <location evidence="6">Endoplasmic reticulum</location>
    </subcellularLocation>
    <subcellularLocation>
        <location evidence="4">Cell junction</location>
    </subcellularLocation>
    <text>At cell-cell contacts in lung epithelial cells (PubMed:10896674).</text>
</comment>
<comment type="subcellular location">
    <molecule>Processed PDZ domain-containing protein 2</molecule>
    <subcellularLocation>
        <location>Secreted</location>
    </subcellularLocation>
</comment>
<comment type="tissue specificity">
    <text evidence="4 6">Expressed in the heart, liver, brain, spleen, lung, kidney, testis and skeletal muscle.</text>
</comment>
<comment type="PTM">
    <text>A secreted form is produced by caspase-mediated proteolytic cleavage.</text>
</comment>
<protein>
    <recommendedName>
        <fullName>PDZ domain-containing protein 2</fullName>
    </recommendedName>
    <alternativeName>
        <fullName>PDZ domain-containing protein 3</fullName>
    </alternativeName>
    <alternativeName>
        <fullName>Plakophilin-related armadillo repeat protein-interacting PDZ protein</fullName>
    </alternativeName>
    <component>
        <recommendedName>
            <fullName>Processed PDZ domain-containing protein 2</fullName>
        </recommendedName>
    </component>
</protein>
<sequence length="2766" mass="293890">MPITQDNALLHLPLLYEWLQNSLREGGDSPEQRLCQAAIQKLQEYIQLNLAVDESTVPPDHSPPEMEICTVYLTKQLGDTETVGLSFGNIPVFGDYGEKRRGGKKRKTHQGPVLDVGCIWVTELRKNSPAGKSGKVRLRDEILSLNGQLMVGVDVTGASYLAEQCWNGGFIYLIMLRRFKQKAHVTYNGNSGNSSEPGETPTLELGDQTSKKGKRTRKFGVISRPSISKTPEDSKSSSGCDTADDPNSELENGADPELGNGHAFELENGPHSLKDVAGPHLERSEADSEVELRVPKTEAPLSDSNDKRRFSKTGKTDFQSSDCLAREEVGRIWKMELLKESDGLGIQVSGGRGSKRSPHAIVVTQVKEGGAAHRDGRLSLGDELLVINGHLLVGLSHEEAVAILRSATGMVQLVVASKMPGSEESQDVGSSEESKGNLESPKQGNCKTKLKSRLSGGVHRLESVEEYNELMVRNGDPRIRMLEVSRDGRKHSLPQLLDSTGTSQEYHIVKKSTRSLSTTHVESPWRLIRPSVISIIGLYKEKGKGLGFSIAGGRDCIRGQMGIFVKTIFPNGSAAEDGRLKEGDEILDVNGIPIKGLTFQEAIHTFKQIRSGLFVLTVRTKLLSPSLTPCSTPTHMSRSSSPSFNTNSGGTPAGGGQEEGGSSSLGRKAPGPKDRIVMEVTLNKEPRVGLGIGACCLALENSPPGIYIHSLAPGSVAKMESNLSRGDQILEVNSVNVRHAALSKVHAILSKCPPGPVRLVIGRHPNPKVSEQEMDEVIARSTYQESREANSSPGLGTPLKSPSLAKKDSLLSESELSQYFVHDGQGSLSDFVVAGSEDEDHPGSGYETSEDGSLLPVPSAHKARANSLVTLGSQRTSGLLHKQVTVARQASLPGSPQVLRNPLLRQRRVRCYDSNGGSDDEDFDGEGDCISLPGVLPGPGKPLVEDDTRPALTTSSKSIDVNKQEERLQKPLVSKACSVPLLGSSLDSEHSILNGAGGTPPKVASLPGSGETPKNGPRGSGRKEMSGSRSSPKLEYRVPTDTQSPRSPENHTSPPQKSENLVSRHKPVARISPHYKRSDAEEAPGGTANGPCAQDLKVQASPVKDPVTSRQPGGTAEKELRGNPTPGDSSVPTNCGPASTPCHPNIGLPTENPQGAAPECGPHPGTGWDGSSEHLCSPGKSREVHPDSSETPTVAEQVHQPESLSQPVSPRTSEPESQGISKMKPPSQRCVSPREKASTPPDSSRAWAAPGDSSPSTRRIAVPMSTGAAPATAIPQASLVSQERSRGLSGPSKGLGTKELCIPKSLKDGALLEDTAPASGKMSHASSPSGPVATERTLSGSPENPVTDIDNFIEEASEARLSQSPQKADCRAHGDTFESQPPGGAGSSSSHHAQMVRSDQTSSPRKTGGTGSPPPQQWALQPSVLDSIHPDKHLAVNKTFLNNYSRNFSNFHEDSISLSGPGGSSEPSPSSMYGNAEDSSSDPESLAEDPGAAARNNWSPPLSPESSPKEGSSESEDERIEICSTDGCPGTPVTAPPPTQVALCPVLPVQQRAVCKPVGDICERACFVPGASRTSIPDSSQPFSFLDVSSEEPETWASINASQNHMPVCTEGIMDVTSTSSNMGDSQSSQMTRHCRNAPFVLGNPDMVNDLGRDLLDEGAPKEGAAAASVMRSVFALGAEGPKNGEAVLADLHIAERGNLEDLLQKPKTISRRPILTWFKEINKDSQGSHLRSTSEKEQSSMLALGPGSKANMVNTGHRKGVTVPKSPPSRQKSQENKDLPPKSPVETLGNCQKPKCSPKLKRLNSKGKASPEVPVAISTKGSRNDHRKTLPSPQASHKMFSKAVSHRLHIADQEEPKNTAGDTPKPPQCVPESKPPQAALGSLRTSASDTSIRTFTSPLTSPKLLPEQGANSRFHMAVYLESDTSCPTTSRSPRSGPEGKAPHANSGSASPPASRASLALAGIRQSKQFTPGRADLLVSEATQPQGICEKGAEKKVSDPPQRTNQLKIVEISSERVPKNACGDRPPESDRKGGFLTQNNCQEKSAIRLRQSEESSPEHTPFPPSQASQVEREIRWSFSMAKPATSSSSSLQLPAKLPESFQGKSSQMPASVGVPKNGVPIGLAGEESPYFTPRPATRTYSMPAQFSSHFGREGPSPHSPSHSPQDPQVPAMGGKLSEKTAKGVTNGQGVYSVKPLLETSKNLSPVDGRDVSADPETSCLIPDKVKVTRRQYCCEQSWPHESTSFFSVKQRIKSFENLANSDRPTAKCATSPFLSVSSKPPINRRSSGSIPSGSPSDMTSRSLRRSLSSCSESQSEASSLLPQMTKSPSSMTLTVSRQNPPDTSNKGPSPDPKKSLVPVGIPTSTVSPASPSKRNKSSVRHAQPSPVSRSKLQERRTLSMPDLDKLCNGEDDSASPGAVLFKTQLEITPRRSKGSQATSPAGSPARGHADFNGSTFLSCPMNGGTRAYTKGNSPPASEPAIATGSREEGESVWATPSGKSWSVSLDRLLASVGNQQRLQGILSLVGSKSPILTLIQEAKAQSETKEDICFIVLNKKEGSGLGFSVAGGADVEPKSVMVHRVFSQGVASQEGTVSRGDFLLSVNGTSLAGLAHSEVTKVLHQAELHKHALMIIKKGNDQPGPSFKQEPPSANGKGPFPRRTLPLEPGAGRNGAAHDALCVEVLKTSAGLGLSLDGGKSSVSGEGPLVIKRVYKGGAAERAGTIEAGDEILAINGKPLVGLVHFDAWNIMKSVPEGPVQLVIRKHRDS</sequence>
<dbReference type="EMBL" id="AF169411">
    <property type="protein sequence ID" value="AAD55940.1"/>
    <property type="molecule type" value="mRNA"/>
</dbReference>
<dbReference type="RefSeq" id="NP_075229.1">
    <property type="nucleotide sequence ID" value="NM_022940.1"/>
</dbReference>
<dbReference type="SMR" id="Q9QZR8"/>
<dbReference type="FunCoup" id="Q9QZR8">
    <property type="interactions" value="443"/>
</dbReference>
<dbReference type="IntAct" id="Q9QZR8">
    <property type="interactions" value="2"/>
</dbReference>
<dbReference type="MINT" id="Q9QZR8"/>
<dbReference type="STRING" id="10116.ENSRNOP00000017937"/>
<dbReference type="GlyGen" id="Q9QZR8">
    <property type="glycosylation" value="4 sites"/>
</dbReference>
<dbReference type="iPTMnet" id="Q9QZR8"/>
<dbReference type="PhosphoSitePlus" id="Q9QZR8"/>
<dbReference type="SwissPalm" id="Q9QZR8"/>
<dbReference type="PaxDb" id="10116-ENSRNOP00000017937"/>
<dbReference type="GeneID" id="65034"/>
<dbReference type="KEGG" id="rno:65034"/>
<dbReference type="AGR" id="RGD:619958"/>
<dbReference type="CTD" id="23037"/>
<dbReference type="RGD" id="619958">
    <property type="gene designation" value="Pdzd2"/>
</dbReference>
<dbReference type="eggNOG" id="KOG3528">
    <property type="taxonomic scope" value="Eukaryota"/>
</dbReference>
<dbReference type="InParanoid" id="Q9QZR8"/>
<dbReference type="PhylomeDB" id="Q9QZR8"/>
<dbReference type="PRO" id="PR:Q9QZR8"/>
<dbReference type="Proteomes" id="UP000002494">
    <property type="component" value="Unplaced"/>
</dbReference>
<dbReference type="GO" id="GO:0045177">
    <property type="term" value="C:apical part of cell"/>
    <property type="evidence" value="ECO:0000314"/>
    <property type="project" value="RGD"/>
</dbReference>
<dbReference type="GO" id="GO:0005911">
    <property type="term" value="C:cell-cell junction"/>
    <property type="evidence" value="ECO:0000314"/>
    <property type="project" value="UniProtKB"/>
</dbReference>
<dbReference type="GO" id="GO:0005737">
    <property type="term" value="C:cytoplasm"/>
    <property type="evidence" value="ECO:0000250"/>
    <property type="project" value="UniProtKB"/>
</dbReference>
<dbReference type="GO" id="GO:0005783">
    <property type="term" value="C:endoplasmic reticulum"/>
    <property type="evidence" value="ECO:0000314"/>
    <property type="project" value="UniProtKB"/>
</dbReference>
<dbReference type="GO" id="GO:0005576">
    <property type="term" value="C:extracellular region"/>
    <property type="evidence" value="ECO:0000314"/>
    <property type="project" value="UniProtKB"/>
</dbReference>
<dbReference type="GO" id="GO:0005634">
    <property type="term" value="C:nucleus"/>
    <property type="evidence" value="ECO:0000314"/>
    <property type="project" value="UniProtKB"/>
</dbReference>
<dbReference type="GO" id="GO:0007155">
    <property type="term" value="P:cell adhesion"/>
    <property type="evidence" value="ECO:0007669"/>
    <property type="project" value="UniProtKB-KW"/>
</dbReference>
<dbReference type="GO" id="GO:0035556">
    <property type="term" value="P:intracellular signal transduction"/>
    <property type="evidence" value="ECO:0000304"/>
    <property type="project" value="RGD"/>
</dbReference>
<dbReference type="CDD" id="cd23061">
    <property type="entry name" value="PDZ1_PDZD2-like"/>
    <property type="match status" value="1"/>
</dbReference>
<dbReference type="CDD" id="cd06758">
    <property type="entry name" value="PDZ2_PDZD2-like"/>
    <property type="match status" value="1"/>
</dbReference>
<dbReference type="CDD" id="cd06759">
    <property type="entry name" value="PDZ3_PDZD2-PDZ1_hPro-IL-16-like"/>
    <property type="match status" value="1"/>
</dbReference>
<dbReference type="CDD" id="cd06760">
    <property type="entry name" value="PDZ4_PDZD2-PDZ2_hPro-IL-16-like"/>
    <property type="match status" value="1"/>
</dbReference>
<dbReference type="CDD" id="cd06762">
    <property type="entry name" value="PDZ6_PDZD2-PDZ3_hPro-IL-16-like"/>
    <property type="match status" value="1"/>
</dbReference>
<dbReference type="CDD" id="cd06763">
    <property type="entry name" value="PDZ7_PDZD2-PDZ4_hPro-IL-16-like"/>
    <property type="match status" value="1"/>
</dbReference>
<dbReference type="FunFam" id="2.30.42.10:FF:000188">
    <property type="entry name" value="PDZ domain containing 2"/>
    <property type="match status" value="1"/>
</dbReference>
<dbReference type="FunFam" id="2.30.42.10:FF:000217">
    <property type="entry name" value="PDZ domain containing 2"/>
    <property type="match status" value="1"/>
</dbReference>
<dbReference type="FunFam" id="2.30.42.10:FF:000227">
    <property type="entry name" value="PDZ domain containing 2"/>
    <property type="match status" value="1"/>
</dbReference>
<dbReference type="FunFam" id="2.30.42.10:FF:000102">
    <property type="entry name" value="Putative pro-interleukin-16"/>
    <property type="match status" value="1"/>
</dbReference>
<dbReference type="Gene3D" id="2.30.42.10">
    <property type="match status" value="6"/>
</dbReference>
<dbReference type="InterPro" id="IPR001478">
    <property type="entry name" value="PDZ"/>
</dbReference>
<dbReference type="InterPro" id="IPR036034">
    <property type="entry name" value="PDZ_sf"/>
</dbReference>
<dbReference type="PANTHER" id="PTHR11324">
    <property type="entry name" value="IL16-RELATED"/>
    <property type="match status" value="1"/>
</dbReference>
<dbReference type="PANTHER" id="PTHR11324:SF16">
    <property type="entry name" value="PDZ DOMAIN-CONTAINING PROTEIN 2"/>
    <property type="match status" value="1"/>
</dbReference>
<dbReference type="Pfam" id="PF00595">
    <property type="entry name" value="PDZ"/>
    <property type="match status" value="5"/>
</dbReference>
<dbReference type="SMART" id="SM00228">
    <property type="entry name" value="PDZ"/>
    <property type="match status" value="6"/>
</dbReference>
<dbReference type="SUPFAM" id="SSF50156">
    <property type="entry name" value="PDZ domain-like"/>
    <property type="match status" value="6"/>
</dbReference>
<dbReference type="PROSITE" id="PS50106">
    <property type="entry name" value="PDZ"/>
    <property type="match status" value="6"/>
</dbReference>
<proteinExistence type="evidence at protein level"/>
<gene>
    <name type="primary">Pdzd2</name>
    <name type="synonym">Papin</name>
    <name type="synonym">Pdzk3</name>
    <name type="synonym">Pin1</name>
</gene>
<accession>Q9QZR8</accession>
<evidence type="ECO:0000250" key="1">
    <source>
        <dbReference type="UniProtKB" id="O15018"/>
    </source>
</evidence>
<evidence type="ECO:0000255" key="2">
    <source>
        <dbReference type="PROSITE-ProRule" id="PRU00143"/>
    </source>
</evidence>
<evidence type="ECO:0000256" key="3">
    <source>
        <dbReference type="SAM" id="MobiDB-lite"/>
    </source>
</evidence>
<evidence type="ECO:0000269" key="4">
    <source>
    </source>
</evidence>
<evidence type="ECO:0000269" key="5">
    <source>
    </source>
</evidence>
<evidence type="ECO:0000269" key="6">
    <source>
    </source>
</evidence>
<evidence type="ECO:0007744" key="7">
    <source>
    </source>
</evidence>
<organism>
    <name type="scientific">Rattus norvegicus</name>
    <name type="common">Rat</name>
    <dbReference type="NCBI Taxonomy" id="10116"/>
    <lineage>
        <taxon>Eukaryota</taxon>
        <taxon>Metazoa</taxon>
        <taxon>Chordata</taxon>
        <taxon>Craniata</taxon>
        <taxon>Vertebrata</taxon>
        <taxon>Euteleostomi</taxon>
        <taxon>Mammalia</taxon>
        <taxon>Eutheria</taxon>
        <taxon>Euarchontoglires</taxon>
        <taxon>Glires</taxon>
        <taxon>Rodentia</taxon>
        <taxon>Myomorpha</taxon>
        <taxon>Muroidea</taxon>
        <taxon>Muridae</taxon>
        <taxon>Murinae</taxon>
        <taxon>Rattus</taxon>
    </lineage>
</organism>
<reference key="1">
    <citation type="journal article" date="2000" name="J. Biol. Chem.">
        <title>A novel multiple PSD-95/Dlg-A/ZO-1 protein interacting with neural plakophilin-related armadillo repeat protein/delta-catenin and p0071.</title>
        <authorList>
            <person name="Deguchi M."/>
            <person name="Iizuka T."/>
            <person name="Hata Y."/>
            <person name="Nishimura W."/>
            <person name="Hirao K."/>
            <person name="Yao I."/>
            <person name="Kawabe H."/>
            <person name="Takai Y."/>
        </authorList>
    </citation>
    <scope>NUCLEOTIDE SEQUENCE [MRNA]</scope>
    <scope>INTERACTION WITH CTNND2 AND PKP4</scope>
    <scope>TISSUE SPECIFICITY</scope>
    <scope>SUBCELLULAR LOCATION</scope>
    <source>
        <tissue>Brain</tissue>
    </source>
</reference>
<reference key="2">
    <citation type="journal article" date="2003" name="EMBO Rep.">
        <title>Proteolytic cleavage of PDZD2 generates a secreted peptide containing two PDZ domains.</title>
        <authorList>
            <person name="Yeung M.-L."/>
            <person name="Tam T.S.M."/>
            <person name="Tsang A.C.C."/>
            <person name="Yao K.-M."/>
        </authorList>
    </citation>
    <scope>SITE CRITICAL TO PROTEOLYSIS</scope>
    <scope>MUTAGENESIS OF ASP-2402 AND ASP-2404</scope>
    <scope>IDENTIFICATION BY MASS SPECTROMETRY</scope>
    <scope>TISSUE SPECIFICITY</scope>
    <scope>SUBCELLULAR LOCATION</scope>
</reference>
<reference key="3">
    <citation type="journal article" date="2003" name="Brain Res. Mol. Brain Res.">
        <title>Sensory neuron proteins interact with the intracellular domains of sodium channel NaV1.8.</title>
        <authorList>
            <person name="Malik-Hall M."/>
            <person name="Poon W.-Y.L."/>
            <person name="Baker M.D."/>
            <person name="Wood J.N."/>
            <person name="Okuse K."/>
        </authorList>
    </citation>
    <scope>INTERACTION WITH SCN10A</scope>
</reference>
<reference key="4">
    <citation type="journal article" date="2012" name="Nat. Commun.">
        <title>Quantitative maps of protein phosphorylation sites across 14 different rat organs and tissues.</title>
        <authorList>
            <person name="Lundby A."/>
            <person name="Secher A."/>
            <person name="Lage K."/>
            <person name="Nordsborg N.B."/>
            <person name="Dmytriyev A."/>
            <person name="Lundby C."/>
            <person name="Olsen J.V."/>
        </authorList>
    </citation>
    <scope>PHOSPHORYLATION [LARGE SCALE ANALYSIS] AT SER-517; SER-891; SER-895 AND SER-1767</scope>
    <scope>IDENTIFICATION BY MASS SPECTROMETRY [LARGE SCALE ANALYSIS]</scope>
</reference>
<name>PDZD2_RAT</name>